<reference key="1">
    <citation type="journal article" date="1988" name="Curr. Genet.">
        <title>Nucleotide sequences of cDNAs encoding the entire precursor polypeptides for subunits II and III of the photosystem I reaction center from spinach.</title>
        <authorList>
            <person name="Muench S."/>
            <person name="Ljungberg U."/>
            <person name="Steppuhn J."/>
            <person name="Schneiderbauer A."/>
            <person name="Nechushtai R."/>
            <person name="Beyreuther K."/>
            <person name="Herrmann R.G."/>
        </authorList>
    </citation>
    <scope>NUCLEOTIDE SEQUENCE [MRNA]</scope>
    <source>
        <tissue>Seedling</tissue>
    </source>
</reference>
<reference key="2">
    <citation type="journal article" date="1992" name="Eur. J. Biochem.">
        <title>Purification and membrane topology of PSI-D and PSI-E, two subunits of the photosystem I reaction center.</title>
        <authorList>
            <person name="Lagoutte B."/>
            <person name="Vallon O."/>
        </authorList>
    </citation>
    <scope>PARTIAL PROTEIN SEQUENCE</scope>
    <scope>SUBCELLULAR LOCATION</scope>
</reference>
<feature type="transit peptide" description="Chloroplast">
    <location>
        <begin position="1"/>
        <end position="34"/>
    </location>
</feature>
<feature type="chain" id="PRO_0000029386" description="Photosystem I reaction center subunit IV, chloroplastic">
    <location>
        <begin position="35"/>
        <end position="125"/>
    </location>
</feature>
<feature type="region of interest" description="Disordered" evidence="2">
    <location>
        <begin position="42"/>
        <end position="68"/>
    </location>
</feature>
<feature type="compositionally biased region" description="Low complexity" evidence="2">
    <location>
        <begin position="42"/>
        <end position="57"/>
    </location>
</feature>
<keyword id="KW-0002">3D-structure</keyword>
<keyword id="KW-0150">Chloroplast</keyword>
<keyword id="KW-0903">Direct protein sequencing</keyword>
<keyword id="KW-0472">Membrane</keyword>
<keyword id="KW-0602">Photosynthesis</keyword>
<keyword id="KW-0603">Photosystem I</keyword>
<keyword id="KW-0934">Plastid</keyword>
<keyword id="KW-1185">Reference proteome</keyword>
<keyword id="KW-0793">Thylakoid</keyword>
<keyword id="KW-0809">Transit peptide</keyword>
<accession>P12354</accession>
<accession>Q9S8Z4</accession>
<accession>Q9S8Z5</accession>
<proteinExistence type="evidence at protein level"/>
<gene>
    <name type="primary">PSAE-1</name>
</gene>
<gene>
    <name type="primary">PSAE-2</name>
</gene>
<dbReference type="EMBL" id="X14018">
    <property type="protein sequence ID" value="CAA32183.1"/>
    <property type="molecule type" value="mRNA"/>
</dbReference>
<dbReference type="PIR" id="S00450">
    <property type="entry name" value="F1SP4"/>
</dbReference>
<dbReference type="PDB" id="9GRX">
    <property type="method" value="EM"/>
    <property type="resolution" value="3.19 A"/>
    <property type="chains" value="e=58-125"/>
</dbReference>
<dbReference type="PDBsum" id="9GRX"/>
<dbReference type="EMDB" id="EMD-51527"/>
<dbReference type="SMR" id="P12354"/>
<dbReference type="OrthoDB" id="2161449at2759"/>
<dbReference type="Proteomes" id="UP001155700">
    <property type="component" value="Unplaced"/>
</dbReference>
<dbReference type="GO" id="GO:0009535">
    <property type="term" value="C:chloroplast thylakoid membrane"/>
    <property type="evidence" value="ECO:0007669"/>
    <property type="project" value="UniProtKB-SubCell"/>
</dbReference>
<dbReference type="GO" id="GO:0009538">
    <property type="term" value="C:photosystem I reaction center"/>
    <property type="evidence" value="ECO:0007669"/>
    <property type="project" value="InterPro"/>
</dbReference>
<dbReference type="GO" id="GO:0051219">
    <property type="term" value="F:phosphoprotein binding"/>
    <property type="evidence" value="ECO:0000353"/>
    <property type="project" value="CAFA"/>
</dbReference>
<dbReference type="GO" id="GO:0015979">
    <property type="term" value="P:photosynthesis"/>
    <property type="evidence" value="ECO:0007669"/>
    <property type="project" value="UniProtKB-KW"/>
</dbReference>
<dbReference type="FunFam" id="2.30.30.50:FF:000001">
    <property type="entry name" value="Photosystem I reaction center subunit IV, chloroplastic"/>
    <property type="match status" value="1"/>
</dbReference>
<dbReference type="Gene3D" id="2.30.30.50">
    <property type="match status" value="1"/>
</dbReference>
<dbReference type="InterPro" id="IPR008990">
    <property type="entry name" value="Elect_transpt_acc-like_dom_sf"/>
</dbReference>
<dbReference type="InterPro" id="IPR003375">
    <property type="entry name" value="PSI_PsaE"/>
</dbReference>
<dbReference type="PANTHER" id="PTHR34549">
    <property type="entry name" value="PHOTOSYSTEM I REACTION CENTER SUBUNIT IV A, CHLOROPLASTIC-RELATED"/>
    <property type="match status" value="1"/>
</dbReference>
<dbReference type="PANTHER" id="PTHR34549:SF10">
    <property type="entry name" value="PHOTOSYSTEM I REACTION CENTER SUBUNIT IV A, CHLOROPLASTIC-RELATED"/>
    <property type="match status" value="1"/>
</dbReference>
<dbReference type="Pfam" id="PF02427">
    <property type="entry name" value="PSI_PsaE"/>
    <property type="match status" value="1"/>
</dbReference>
<dbReference type="SUPFAM" id="SSF50090">
    <property type="entry name" value="Electron transport accessory proteins"/>
    <property type="match status" value="1"/>
</dbReference>
<organism>
    <name type="scientific">Spinacia oleracea</name>
    <name type="common">Spinach</name>
    <dbReference type="NCBI Taxonomy" id="3562"/>
    <lineage>
        <taxon>Eukaryota</taxon>
        <taxon>Viridiplantae</taxon>
        <taxon>Streptophyta</taxon>
        <taxon>Embryophyta</taxon>
        <taxon>Tracheophyta</taxon>
        <taxon>Spermatophyta</taxon>
        <taxon>Magnoliopsida</taxon>
        <taxon>eudicotyledons</taxon>
        <taxon>Gunneridae</taxon>
        <taxon>Pentapetalae</taxon>
        <taxon>Caryophyllales</taxon>
        <taxon>Chenopodiaceae</taxon>
        <taxon>Chenopodioideae</taxon>
        <taxon>Anserineae</taxon>
        <taxon>Spinacia</taxon>
    </lineage>
</organism>
<comment type="function">
    <text evidence="1">Stabilizes the interaction between PsaC and the PSI core, assists the docking of the ferredoxin to PSI and interacts with ferredoxin-NADP oxidoreductase.</text>
</comment>
<comment type="subcellular location">
    <subcellularLocation>
        <location evidence="3">Plastid</location>
        <location evidence="3">Chloroplast thylakoid membrane</location>
        <topology evidence="3">Peripheral membrane protein</topology>
    </subcellularLocation>
</comment>
<comment type="similarity">
    <text evidence="4">Belongs to the PsaE family.</text>
</comment>
<name>PSAE_SPIOL</name>
<protein>
    <recommendedName>
        <fullName>Photosystem I reaction center subunit IV, chloroplastic</fullName>
        <shortName>PSI-E</shortName>
    </recommendedName>
</protein>
<evidence type="ECO:0000250" key="1"/>
<evidence type="ECO:0000256" key="2">
    <source>
        <dbReference type="SAM" id="MobiDB-lite"/>
    </source>
</evidence>
<evidence type="ECO:0000269" key="3">
    <source>
    </source>
</evidence>
<evidence type="ECO:0000305" key="4"/>
<sequence length="125" mass="13367">MASIASSVAVRLGLTQVLPNKNFSSPRSTRLVVRAAEEAAAAPAAASPEGEAPKAAAKPPPIGPKRGSKVRIMRKESYWYKGVGSVVAVDQDPKTRYPVVVRFNKVNYANVSTNNYALDEIQEVA</sequence>